<organism>
    <name type="scientific">Escherichia coli (strain K12)</name>
    <dbReference type="NCBI Taxonomy" id="83333"/>
    <lineage>
        <taxon>Bacteria</taxon>
        <taxon>Pseudomonadati</taxon>
        <taxon>Pseudomonadota</taxon>
        <taxon>Gammaproteobacteria</taxon>
        <taxon>Enterobacterales</taxon>
        <taxon>Enterobacteriaceae</taxon>
        <taxon>Escherichia</taxon>
    </lineage>
</organism>
<dbReference type="EMBL" id="U73857">
    <property type="protein sequence ID" value="AAB18045.1"/>
    <property type="molecule type" value="Genomic_DNA"/>
</dbReference>
<dbReference type="EMBL" id="U00096">
    <property type="protein sequence ID" value="AAC73422.1"/>
    <property type="molecule type" value="Genomic_DNA"/>
</dbReference>
<dbReference type="EMBL" id="AP009048">
    <property type="protein sequence ID" value="BAE76102.1"/>
    <property type="molecule type" value="Genomic_DNA"/>
</dbReference>
<dbReference type="PIR" id="G64758">
    <property type="entry name" value="G64758"/>
</dbReference>
<dbReference type="RefSeq" id="NP_414853.1">
    <property type="nucleotide sequence ID" value="NC_000913.3"/>
</dbReference>
<dbReference type="RefSeq" id="WP_001310582.1">
    <property type="nucleotide sequence ID" value="NZ_LN832404.1"/>
</dbReference>
<dbReference type="BioGRID" id="4262807">
    <property type="interactions" value="19"/>
</dbReference>
<dbReference type="BioGRID" id="851468">
    <property type="interactions" value="1"/>
</dbReference>
<dbReference type="FunCoup" id="P77297">
    <property type="interactions" value="423"/>
</dbReference>
<dbReference type="IntAct" id="P77297">
    <property type="interactions" value="6"/>
</dbReference>
<dbReference type="STRING" id="511145.b0319"/>
<dbReference type="PaxDb" id="511145-b0319"/>
<dbReference type="EnsemblBacteria" id="AAC73422">
    <property type="protein sequence ID" value="AAC73422"/>
    <property type="gene ID" value="b0319"/>
</dbReference>
<dbReference type="GeneID" id="947134"/>
<dbReference type="KEGG" id="ecj:JW0311"/>
<dbReference type="KEGG" id="eco:b0319"/>
<dbReference type="KEGG" id="ecoc:C3026_01565"/>
<dbReference type="KEGG" id="ecoc:C3026_24735"/>
<dbReference type="PATRIC" id="fig|511145.12.peg.326"/>
<dbReference type="EchoBASE" id="EB3359"/>
<dbReference type="eggNOG" id="ENOG502Z84Q">
    <property type="taxonomic scope" value="Bacteria"/>
</dbReference>
<dbReference type="HOGENOM" id="CLU_072005_1_0_6"/>
<dbReference type="InParanoid" id="P77297"/>
<dbReference type="OMA" id="THFDGLF"/>
<dbReference type="OrthoDB" id="4933449at2"/>
<dbReference type="PhylomeDB" id="P77297"/>
<dbReference type="BioCyc" id="EcoCyc:G6184-MONOMER"/>
<dbReference type="PRO" id="PR:P77297"/>
<dbReference type="Proteomes" id="UP000000625">
    <property type="component" value="Chromosome"/>
</dbReference>
<dbReference type="InterPro" id="IPR021530">
    <property type="entry name" value="AllH-like"/>
</dbReference>
<dbReference type="Pfam" id="PF11392">
    <property type="entry name" value="AllH"/>
    <property type="match status" value="1"/>
</dbReference>
<sequence>MWALTADADFLAQRGQGQVEQVFARAVNIALPARQQLLTLLCEEYDNAPNSCRLALTHFDDLFRHGDKVQFDDQGITVGQHLHIEMSRCRRWLSPTLQMTAVNFHLIAWLQWHDIIHQHLGENETLFNYRGDNPFYQALNKELHIKRRAVIQAVNDKQNIASAVASMMGLGIGLTPSADDYLTGLALILFIPGHPAEKYKEEFYLGLQRGKNNTTLLSAITLEAALQQRCRENIHRFIHNIIYDIPGNATQAIEKIKHIGSSSGCDMLYGMADGCALSQTYGGNYVS</sequence>
<gene>
    <name type="primary">yahE</name>
    <name type="ordered locus">b0319</name>
    <name type="ordered locus">JW0311</name>
</gene>
<accession>P77297</accession>
<accession>Q2MCA4</accession>
<name>YAHE_ECOLI</name>
<feature type="chain" id="PRO_0000168575" description="Uncharacterized protein YahE">
    <location>
        <begin position="1"/>
        <end position="287"/>
    </location>
</feature>
<proteinExistence type="inferred from homology"/>
<reference key="1">
    <citation type="submission" date="1997-01" db="EMBL/GenBank/DDBJ databases">
        <title>Sequence of minutes 4-25 of Escherichia coli.</title>
        <authorList>
            <person name="Chung E."/>
            <person name="Allen E."/>
            <person name="Araujo R."/>
            <person name="Aparicio A.M."/>
            <person name="Davis K."/>
            <person name="Duncan M."/>
            <person name="Federspiel N."/>
            <person name="Hyman R."/>
            <person name="Kalman S."/>
            <person name="Komp C."/>
            <person name="Kurdi O."/>
            <person name="Lew H."/>
            <person name="Lin D."/>
            <person name="Namath A."/>
            <person name="Oefner P."/>
            <person name="Roberts D."/>
            <person name="Schramm S."/>
            <person name="Davis R.W."/>
        </authorList>
    </citation>
    <scope>NUCLEOTIDE SEQUENCE [LARGE SCALE GENOMIC DNA]</scope>
    <source>
        <strain>K12 / MG1655 / ATCC 47076</strain>
    </source>
</reference>
<reference key="2">
    <citation type="journal article" date="1997" name="Science">
        <title>The complete genome sequence of Escherichia coli K-12.</title>
        <authorList>
            <person name="Blattner F.R."/>
            <person name="Plunkett G. III"/>
            <person name="Bloch C.A."/>
            <person name="Perna N.T."/>
            <person name="Burland V."/>
            <person name="Riley M."/>
            <person name="Collado-Vides J."/>
            <person name="Glasner J.D."/>
            <person name="Rode C.K."/>
            <person name="Mayhew G.F."/>
            <person name="Gregor J."/>
            <person name="Davis N.W."/>
            <person name="Kirkpatrick H.A."/>
            <person name="Goeden M.A."/>
            <person name="Rose D.J."/>
            <person name="Mau B."/>
            <person name="Shao Y."/>
        </authorList>
    </citation>
    <scope>NUCLEOTIDE SEQUENCE [LARGE SCALE GENOMIC DNA]</scope>
    <source>
        <strain>K12 / MG1655 / ATCC 47076</strain>
    </source>
</reference>
<reference key="3">
    <citation type="journal article" date="2006" name="Mol. Syst. Biol.">
        <title>Highly accurate genome sequences of Escherichia coli K-12 strains MG1655 and W3110.</title>
        <authorList>
            <person name="Hayashi K."/>
            <person name="Morooka N."/>
            <person name="Yamamoto Y."/>
            <person name="Fujita K."/>
            <person name="Isono K."/>
            <person name="Choi S."/>
            <person name="Ohtsubo E."/>
            <person name="Baba T."/>
            <person name="Wanner B.L."/>
            <person name="Mori H."/>
            <person name="Horiuchi T."/>
        </authorList>
    </citation>
    <scope>NUCLEOTIDE SEQUENCE [LARGE SCALE GENOMIC DNA]</scope>
    <source>
        <strain>K12 / W3110 / ATCC 27325 / DSM 5911</strain>
    </source>
</reference>
<protein>
    <recommendedName>
        <fullName>Uncharacterized protein YahE</fullName>
    </recommendedName>
</protein>
<keyword id="KW-1185">Reference proteome</keyword>
<evidence type="ECO:0000305" key="1"/>
<comment type="similarity">
    <text evidence="1">Belongs to the AllH family.</text>
</comment>